<sequence>MHHDKRCKESNMKIVKAEVFVTCPGRNFVTLKITTEDGITGLGDATLNGRELSVASYLQDHLCPQLIGRDAHRIEDIWQFFYKGAYWRRGPVTMSAISAVDMALWDIKAKAANMPLYQLLGGASREGVMVYCHTTGHSIDEALDDYARHQELGFKAIRVQCGIPGMKTTYGMSKGKGLAYEPATKGQWPEEQLWSTEKYLDFMPKLFDAVRNKFGFNEHLLHDMHHRLTPIEAARFGKSIEDYRMFWMEDPTPAENQECFRLIRQHTVTPIAVGEVFNSIWDCKQLIEEQLIDYIRTTLTHAGGITGMRRIADFASLYQVRTGSHGPSDLSPVCMAAALHFDLWVPNFGVQEYMGYSEQMLEVFPHNWTFDNGYMHSGDKPGLGIEFDEKLAAKYPYEPAYLPVARLEDGTLWNW</sequence>
<evidence type="ECO:0000250" key="1"/>
<evidence type="ECO:0000269" key="2">
    <source>
    </source>
</evidence>
<evidence type="ECO:0000305" key="3"/>
<organism>
    <name type="scientific">Escherichia coli (strain MS 21-1)</name>
    <dbReference type="NCBI Taxonomy" id="749527"/>
    <lineage>
        <taxon>Bacteria</taxon>
        <taxon>Pseudomonadati</taxon>
        <taxon>Pseudomonadota</taxon>
        <taxon>Gammaproteobacteria</taxon>
        <taxon>Enterobacterales</taxon>
        <taxon>Enterobacteriaceae</taxon>
        <taxon>Escherichia</taxon>
    </lineage>
</organism>
<protein>
    <recommendedName>
        <fullName>D-galactonate dehydratase family member RspA</fullName>
        <ecNumber>4.2.1.-</ecNumber>
    </recommendedName>
    <alternativeName>
        <fullName>D-mannonate dehydratase</fullName>
        <ecNumber>4.2.1.8</ecNumber>
    </alternativeName>
    <alternativeName>
        <fullName>Starvation sensing protein RspA homolog</fullName>
    </alternativeName>
</protein>
<feature type="chain" id="PRO_0000429896" description="D-galactonate dehydratase family member RspA">
    <location>
        <begin position="1"/>
        <end position="415"/>
    </location>
</feature>
<feature type="active site" description="Proton donor/acceptor" evidence="1">
    <location>
        <position position="170"/>
    </location>
</feature>
<feature type="active site" description="Proton donor/acceptor" evidence="1">
    <location>
        <position position="225"/>
    </location>
</feature>
<feature type="binding site" evidence="1">
    <location>
        <position position="48"/>
    </location>
    <ligand>
        <name>substrate</name>
    </ligand>
</feature>
<feature type="binding site" evidence="1">
    <location>
        <position position="133"/>
    </location>
    <ligand>
        <name>substrate</name>
    </ligand>
</feature>
<feature type="binding site" evidence="1">
    <location>
        <position position="223"/>
    </location>
    <ligand>
        <name>Mg(2+)</name>
        <dbReference type="ChEBI" id="CHEBI:18420"/>
    </ligand>
</feature>
<feature type="binding site" evidence="1">
    <location>
        <position position="249"/>
    </location>
    <ligand>
        <name>Mg(2+)</name>
        <dbReference type="ChEBI" id="CHEBI:18420"/>
    </ligand>
</feature>
<feature type="binding site" evidence="1">
    <location>
        <position position="275"/>
    </location>
    <ligand>
        <name>Mg(2+)</name>
        <dbReference type="ChEBI" id="CHEBI:18420"/>
    </ligand>
</feature>
<feature type="binding site" evidence="1">
    <location>
        <position position="275"/>
    </location>
    <ligand>
        <name>substrate</name>
    </ligand>
</feature>
<feature type="binding site" evidence="1">
    <location>
        <position position="296"/>
    </location>
    <ligand>
        <name>substrate</name>
    </ligand>
</feature>
<feature type="binding site" evidence="1">
    <location>
        <position position="325"/>
    </location>
    <ligand>
        <name>substrate</name>
    </ligand>
</feature>
<feature type="binding site" evidence="1">
    <location>
        <position position="329"/>
    </location>
    <ligand>
        <name>substrate</name>
    </ligand>
</feature>
<feature type="binding site" evidence="1">
    <location>
        <position position="352"/>
    </location>
    <ligand>
        <name>substrate</name>
    </ligand>
</feature>
<feature type="site" description="Important for activity and substrate specificity; Pro is observed in family members with low D-mannonate dehydratase activity" evidence="1">
    <location>
        <position position="327"/>
    </location>
</feature>
<proteinExistence type="evidence at protein level"/>
<accession>D8ADB5</accession>
<name>MAND_ECOMS</name>
<reference key="1">
    <citation type="submission" date="2010-06" db="EMBL/GenBank/DDBJ databases">
        <authorList>
            <person name="Weinstock G."/>
            <person name="Sodergren E."/>
            <person name="Clifton S."/>
            <person name="Fulton L."/>
            <person name="Fulton B."/>
            <person name="Courtney L."/>
            <person name="Fronick C."/>
            <person name="Harrison M."/>
            <person name="Strong C."/>
            <person name="Farmer C."/>
            <person name="Delahaunty K."/>
            <person name="Markovic C."/>
            <person name="Hall O."/>
            <person name="Minx P."/>
            <person name="Tomlinson C."/>
            <person name="Mitreva M."/>
            <person name="Hou S."/>
            <person name="Chen J."/>
            <person name="Wollam A."/>
            <person name="Pepin K.H."/>
            <person name="Johnson M."/>
            <person name="Bhonagiri V."/>
            <person name="Zhang X."/>
            <person name="Suruliraj S."/>
            <person name="Warren W."/>
            <person name="Chinwalla A."/>
            <person name="Mardis E.R."/>
            <person name="Wilson R.K."/>
        </authorList>
    </citation>
    <scope>NUCLEOTIDE SEQUENCE [LARGE SCALE GENOMIC DNA]</scope>
    <source>
        <strain>MS 21-1</strain>
    </source>
</reference>
<reference key="2">
    <citation type="journal article" date="2014" name="Biochemistry">
        <title>Discovery of function in the enolase superfamily: D-mannonate and D-gluconate dehydratases in the D-mannonate dehydratase subgroup.</title>
        <authorList>
            <person name="Wichelecki D.J."/>
            <person name="Balthazor B.M."/>
            <person name="Chau A.C."/>
            <person name="Vetting M.W."/>
            <person name="Fedorov A.A."/>
            <person name="Fedorov E.V."/>
            <person name="Lukk T."/>
            <person name="Patskovsky Y.V."/>
            <person name="Stead M.B."/>
            <person name="Hillerich B.S."/>
            <person name="Seidel R.D."/>
            <person name="Almo S.C."/>
            <person name="Gerlt J.A."/>
        </authorList>
    </citation>
    <scope>FUNCTION</scope>
    <scope>CATALYTIC ACTIVITY</scope>
    <scope>COFACTOR</scope>
    <scope>BIOPHYSICOCHEMICAL PROPERTIES</scope>
    <source>
        <strain>MS 21-1</strain>
    </source>
</reference>
<dbReference type="EC" id="4.2.1.-"/>
<dbReference type="EC" id="4.2.1.8"/>
<dbReference type="EMBL" id="ADTR01000410">
    <property type="protein sequence ID" value="EFK18877.1"/>
    <property type="molecule type" value="Genomic_DNA"/>
</dbReference>
<dbReference type="SMR" id="D8ADB5"/>
<dbReference type="HOGENOM" id="CLU_030273_6_1_6"/>
<dbReference type="GO" id="GO:0000287">
    <property type="term" value="F:magnesium ion binding"/>
    <property type="evidence" value="ECO:0000314"/>
    <property type="project" value="UniProtKB"/>
</dbReference>
<dbReference type="GO" id="GO:0008927">
    <property type="term" value="F:mannonate dehydratase activity"/>
    <property type="evidence" value="ECO:0000314"/>
    <property type="project" value="UniProtKB"/>
</dbReference>
<dbReference type="GO" id="GO:0009063">
    <property type="term" value="P:amino acid catabolic process"/>
    <property type="evidence" value="ECO:0007669"/>
    <property type="project" value="InterPro"/>
</dbReference>
<dbReference type="GO" id="GO:0016052">
    <property type="term" value="P:carbohydrate catabolic process"/>
    <property type="evidence" value="ECO:0000314"/>
    <property type="project" value="UniProtKB"/>
</dbReference>
<dbReference type="CDD" id="cd03322">
    <property type="entry name" value="RspA"/>
    <property type="match status" value="1"/>
</dbReference>
<dbReference type="FunFam" id="3.20.20.120:FF:000004">
    <property type="entry name" value="D-galactonate dehydratase family protein"/>
    <property type="match status" value="1"/>
</dbReference>
<dbReference type="FunFam" id="3.30.390.10:FF:000002">
    <property type="entry name" value="D-galactonate dehydratase family protein"/>
    <property type="match status" value="1"/>
</dbReference>
<dbReference type="Gene3D" id="3.20.20.120">
    <property type="entry name" value="Enolase-like C-terminal domain"/>
    <property type="match status" value="1"/>
</dbReference>
<dbReference type="Gene3D" id="3.30.390.10">
    <property type="entry name" value="Enolase-like, N-terminal domain"/>
    <property type="match status" value="1"/>
</dbReference>
<dbReference type="InterPro" id="IPR034589">
    <property type="entry name" value="D-mannonate_dehydratase-like"/>
</dbReference>
<dbReference type="InterPro" id="IPR053379">
    <property type="entry name" value="D-mannonate_dehydratase_GalD"/>
</dbReference>
<dbReference type="InterPro" id="IPR034593">
    <property type="entry name" value="DgoD-like"/>
</dbReference>
<dbReference type="InterPro" id="IPR036849">
    <property type="entry name" value="Enolase-like_C_sf"/>
</dbReference>
<dbReference type="InterPro" id="IPR029017">
    <property type="entry name" value="Enolase-like_N"/>
</dbReference>
<dbReference type="InterPro" id="IPR029065">
    <property type="entry name" value="Enolase_C-like"/>
</dbReference>
<dbReference type="InterPro" id="IPR018110">
    <property type="entry name" value="Mandel_Rmase/mucon_lact_enz_CS"/>
</dbReference>
<dbReference type="InterPro" id="IPR013342">
    <property type="entry name" value="Mandelate_racemase_C"/>
</dbReference>
<dbReference type="InterPro" id="IPR013341">
    <property type="entry name" value="Mandelate_racemase_N_dom"/>
</dbReference>
<dbReference type="NCBIfam" id="NF043051">
    <property type="entry name" value="ManoateDhtManD"/>
    <property type="match status" value="1"/>
</dbReference>
<dbReference type="NCBIfam" id="NF011654">
    <property type="entry name" value="PRK15072.1"/>
    <property type="match status" value="1"/>
</dbReference>
<dbReference type="PANTHER" id="PTHR48080">
    <property type="entry name" value="D-GALACTONATE DEHYDRATASE-RELATED"/>
    <property type="match status" value="1"/>
</dbReference>
<dbReference type="PANTHER" id="PTHR48080:SF6">
    <property type="entry name" value="STARVATION-SENSING PROTEIN RSPA"/>
    <property type="match status" value="1"/>
</dbReference>
<dbReference type="Pfam" id="PF13378">
    <property type="entry name" value="MR_MLE_C"/>
    <property type="match status" value="1"/>
</dbReference>
<dbReference type="Pfam" id="PF02746">
    <property type="entry name" value="MR_MLE_N"/>
    <property type="match status" value="1"/>
</dbReference>
<dbReference type="SFLD" id="SFLDS00001">
    <property type="entry name" value="Enolase"/>
    <property type="match status" value="1"/>
</dbReference>
<dbReference type="SFLD" id="SFLDG00033">
    <property type="entry name" value="mannonate_dehydratase"/>
    <property type="match status" value="1"/>
</dbReference>
<dbReference type="SMART" id="SM00922">
    <property type="entry name" value="MR_MLE"/>
    <property type="match status" value="1"/>
</dbReference>
<dbReference type="SUPFAM" id="SSF51604">
    <property type="entry name" value="Enolase C-terminal domain-like"/>
    <property type="match status" value="1"/>
</dbReference>
<dbReference type="SUPFAM" id="SSF54826">
    <property type="entry name" value="Enolase N-terminal domain-like"/>
    <property type="match status" value="1"/>
</dbReference>
<dbReference type="PROSITE" id="PS00908">
    <property type="entry name" value="MR_MLE_1"/>
    <property type="match status" value="1"/>
</dbReference>
<dbReference type="PROSITE" id="PS00909">
    <property type="entry name" value="MR_MLE_2"/>
    <property type="match status" value="1"/>
</dbReference>
<comment type="function">
    <text evidence="2">Has low D-mannonate dehydratase activity (in vitro), suggesting that this is not a physiological substrate and that it has no significant role in D-mannonate degradation in vivo. Has no detectable activity with a panel of 70 other acid sugars (in vitro).</text>
</comment>
<comment type="catalytic activity">
    <reaction evidence="2">
        <text>D-mannonate = 2-dehydro-3-deoxy-D-gluconate + H2O</text>
        <dbReference type="Rhea" id="RHEA:20097"/>
        <dbReference type="ChEBI" id="CHEBI:15377"/>
        <dbReference type="ChEBI" id="CHEBI:17767"/>
        <dbReference type="ChEBI" id="CHEBI:57990"/>
        <dbReference type="EC" id="4.2.1.8"/>
    </reaction>
</comment>
<comment type="cofactor">
    <cofactor evidence="2">
        <name>Mg(2+)</name>
        <dbReference type="ChEBI" id="CHEBI:18420"/>
    </cofactor>
    <text evidence="2">Binds 1 Mg(2+) ion per subunit.</text>
</comment>
<comment type="biophysicochemical properties">
    <kinetics>
        <text evidence="2">kcat is 0.01 sec(-1) with D-mannonate.</text>
    </kinetics>
</comment>
<comment type="similarity">
    <text evidence="3">Belongs to the mandelate racemase/muconate lactonizing enzyme family. GalD subfamily.</text>
</comment>
<keyword id="KW-0456">Lyase</keyword>
<keyword id="KW-0460">Magnesium</keyword>
<keyword id="KW-0479">Metal-binding</keyword>
<gene>
    <name type="primary">rspA</name>
    <name type="ORF">HMPREF9530_04559</name>
</gene>